<evidence type="ECO:0000250" key="1"/>
<evidence type="ECO:0000255" key="2"/>
<evidence type="ECO:0000305" key="3"/>
<dbReference type="EMBL" id="M94266">
    <property type="protein sequence ID" value="AAA42760.1"/>
    <property type="molecule type" value="Genomic_RNA"/>
</dbReference>
<dbReference type="EMBL" id="AF234533">
    <property type="protein sequence ID" value="AAG10413.1"/>
    <property type="molecule type" value="Genomic_DNA"/>
</dbReference>
<dbReference type="PIR" id="A44060">
    <property type="entry name" value="VGVNBE"/>
</dbReference>
<dbReference type="RefSeq" id="NP_065402.1">
    <property type="nucleotide sequence ID" value="NC_002526.1"/>
</dbReference>
<dbReference type="SMR" id="P32595"/>
<dbReference type="GlyCosmos" id="P32595">
    <property type="glycosylation" value="5 sites, No reported glycans"/>
</dbReference>
<dbReference type="GeneID" id="911729"/>
<dbReference type="KEGG" id="vg:911729"/>
<dbReference type="Proteomes" id="UP000008588">
    <property type="component" value="Segment"/>
</dbReference>
<dbReference type="GO" id="GO:0016020">
    <property type="term" value="C:membrane"/>
    <property type="evidence" value="ECO:0007669"/>
    <property type="project" value="UniProtKB-KW"/>
</dbReference>
<dbReference type="GO" id="GO:0019031">
    <property type="term" value="C:viral envelope"/>
    <property type="evidence" value="ECO:0007669"/>
    <property type="project" value="UniProtKB-KW"/>
</dbReference>
<dbReference type="GO" id="GO:0055036">
    <property type="term" value="C:virion membrane"/>
    <property type="evidence" value="ECO:0007669"/>
    <property type="project" value="UniProtKB-SubCell"/>
</dbReference>
<dbReference type="GO" id="GO:0046718">
    <property type="term" value="P:symbiont entry into host cell"/>
    <property type="evidence" value="ECO:0007669"/>
    <property type="project" value="UniProtKB-KW"/>
</dbReference>
<dbReference type="GO" id="GO:0019062">
    <property type="term" value="P:virion attachment to host cell"/>
    <property type="evidence" value="ECO:0007669"/>
    <property type="project" value="UniProtKB-KW"/>
</dbReference>
<dbReference type="Gene3D" id="2.30.29.130">
    <property type="match status" value="1"/>
</dbReference>
<dbReference type="InterPro" id="IPR018247">
    <property type="entry name" value="EF_Hand_1_Ca_BS"/>
</dbReference>
<dbReference type="InterPro" id="IPR055447">
    <property type="entry name" value="Rhabdo_glycop_CD"/>
</dbReference>
<dbReference type="InterPro" id="IPR001903">
    <property type="entry name" value="Rhabdo_glycop_FD"/>
</dbReference>
<dbReference type="Pfam" id="PF24833">
    <property type="entry name" value="Rhabdo_glycop_CD"/>
    <property type="match status" value="1"/>
</dbReference>
<dbReference type="Pfam" id="PF00974">
    <property type="entry name" value="Rhabdo_glycop_FD"/>
    <property type="match status" value="1"/>
</dbReference>
<dbReference type="SUPFAM" id="SSF161008">
    <property type="entry name" value="Viral glycoprotein ectodomain-like"/>
    <property type="match status" value="1"/>
</dbReference>
<name>GLYCO_BEFVB</name>
<comment type="function">
    <text evidence="1">Attaches the virus to host cellular receptors, inducing endocytosis of the virion. The acidic pH of the endosome induces conformational changes in the glycoprotein trimer which trigger fusion between the virus and the cell membrane (By similarity).</text>
</comment>
<comment type="subunit">
    <text evidence="1">Homotrimer.</text>
</comment>
<comment type="subcellular location">
    <subcellularLocation>
        <location evidence="1">Virion membrane</location>
        <topology evidence="1">Single-pass type I membrane protein</topology>
    </subcellularLocation>
</comment>
<comment type="similarity">
    <text evidence="3">Belongs to the rhabdoviruses glycoprotein family.</text>
</comment>
<sequence>MFKVLIITLLVNKIHLEKIYNVPVNCGELHPVKAHEIKCPQRLNELSLQAHHNLAKDEHYNKICRPQLKDDAHLEGFICRKQRWITKCSETWYFSTSIEYQILEVIPEYSGCTDAVKKLDQGALIPPYYPPAGCFWNTEMNQEIEFYVLIQHKPFLNPYDNLIYDSRFLTPCTINDSKTKGCPLKDITGTWIPDVRVEEISEHCNNKHWECITVKSFRSELNDKERLWEAPDIGLVHVNKGCLSTFCGKNGIIFEDGEWWSIENQTESDFQNFKIEKCKGKKPGFRMHTDRTEFEELDIKAELEHERCLNTISKILNKENINTLDMSYLAPTRPGRDYAYLFEQTSWQEKLCLSLPDSGRVSKDCNIDWRTSTRGGMVKKNHYGIGSYKRAWCEYRPFVDKNEDGYIDIQELNGHNMSGNHAILETAPAGGSSGNRLNVTLNGMIFVEPTKLYLHTKSLYEGIEDYQKLIKFEVMEYDNVEENLIRYEEDEKFKPVNLNPHEKSQINRTDIVREIQKGGKKVLSAVVGWFTSTAKAVRWTIWAVGAIVTTYAIYKLYKMVKSNSSHSKHREADLEGLQSTTKENMRVEKNDKNYQDLELGLYEEIRSIKGGSKQTGDDRFFDH</sequence>
<feature type="signal peptide" evidence="2">
    <location>
        <begin position="1"/>
        <end position="12"/>
    </location>
</feature>
<feature type="chain" id="PRO_0000040988" description="Glycoprotein">
    <location>
        <begin position="13"/>
        <end position="623"/>
    </location>
</feature>
<feature type="topological domain" description="Virion surface" evidence="2">
    <location>
        <begin position="13"/>
        <end position="539"/>
    </location>
</feature>
<feature type="transmembrane region" description="Helical" evidence="2">
    <location>
        <begin position="540"/>
        <end position="554"/>
    </location>
</feature>
<feature type="topological domain" description="Intravirion" evidence="2">
    <location>
        <begin position="555"/>
        <end position="623"/>
    </location>
</feature>
<feature type="glycosylation site" description="N-linked (GlcNAc...) asparagine; by host" evidence="2">
    <location>
        <position position="175"/>
    </location>
</feature>
<feature type="glycosylation site" description="N-linked (GlcNAc...) asparagine; by host" evidence="2">
    <location>
        <position position="264"/>
    </location>
</feature>
<feature type="glycosylation site" description="N-linked (GlcNAc...) asparagine; by host" evidence="2">
    <location>
        <position position="416"/>
    </location>
</feature>
<feature type="glycosylation site" description="N-linked (GlcNAc...) asparagine; by host" evidence="2">
    <location>
        <position position="438"/>
    </location>
</feature>
<feature type="glycosylation site" description="N-linked (GlcNAc...) asparagine; by host" evidence="2">
    <location>
        <position position="507"/>
    </location>
</feature>
<keyword id="KW-0903">Direct protein sequencing</keyword>
<keyword id="KW-0325">Glycoprotein</keyword>
<keyword id="KW-0945">Host-virus interaction</keyword>
<keyword id="KW-0472">Membrane</keyword>
<keyword id="KW-1185">Reference proteome</keyword>
<keyword id="KW-0732">Signal</keyword>
<keyword id="KW-0812">Transmembrane</keyword>
<keyword id="KW-1133">Transmembrane helix</keyword>
<keyword id="KW-1161">Viral attachment to host cell</keyword>
<keyword id="KW-0261">Viral envelope protein</keyword>
<keyword id="KW-0946">Virion</keyword>
<keyword id="KW-1160">Virus entry into host cell</keyword>
<organism>
    <name type="scientific">Bovine ephemeral fever virus (strain BB7721)</name>
    <name type="common">BEFV</name>
    <dbReference type="NCBI Taxonomy" id="928297"/>
    <lineage>
        <taxon>Viruses</taxon>
        <taxon>Riboviria</taxon>
        <taxon>Orthornavirae</taxon>
        <taxon>Negarnaviricota</taxon>
        <taxon>Haploviricotina</taxon>
        <taxon>Monjiviricetes</taxon>
        <taxon>Mononegavirales</taxon>
        <taxon>Rhabdoviridae</taxon>
        <taxon>Alpharhabdovirinae</taxon>
        <taxon>Ephemerovirus</taxon>
        <taxon>Ephemerovirus febris</taxon>
    </lineage>
</organism>
<reference key="1">
    <citation type="journal article" date="1992" name="Virology">
        <title>The genome of bovine ephemeral fever rhabdovirus contains two related glycoprotein genes.</title>
        <authorList>
            <person name="Walker P.J."/>
            <person name="Byrne K.A."/>
            <person name="Riding G.A."/>
            <person name="Cowley J.A."/>
            <person name="Wang Y."/>
            <person name="McWilliam S."/>
        </authorList>
    </citation>
    <scope>NUCLEOTIDE SEQUENCE [GENOMIC RNA]</scope>
    <scope>PARTIAL PROTEIN SEQUENCE</scope>
</reference>
<reference key="2">
    <citation type="journal article" date="1994" name="J. Gen. Virol.">
        <title>Structural and antigenic analysis of the nucleoprotein of bovine ephemeral fever rhabdovirus.</title>
        <authorList>
            <person name="Walker P.J."/>
            <person name="Wang Y."/>
            <person name="Cowley J.A."/>
            <person name="McWilliam S.M."/>
            <person name="Prehaud C.J."/>
        </authorList>
    </citation>
    <scope>NUCLEOTIDE SEQUENCE [GENOMIC RNA]</scope>
</reference>
<reference key="3">
    <citation type="journal article" date="2000" name="Virus Res.">
        <title>RNA polymerase (L) gene and genome terminal sequences of ephemeroviruses bovine ephemeral fever virus and Adelaide River virus indicate a close relationship to vesiculoviruses.</title>
        <authorList>
            <person name="Dhillon J."/>
            <person name="Cowley J.A."/>
            <person name="Wang Y."/>
            <person name="Walker P.J."/>
        </authorList>
    </citation>
    <scope>NUCLEOTIDE SEQUENCE [GENOMIC RNA]</scope>
</reference>
<gene>
    <name type="primary">G</name>
</gene>
<organismHost>
    <name type="scientific">Bos taurus</name>
    <name type="common">Bovine</name>
    <dbReference type="NCBI Taxonomy" id="9913"/>
</organismHost>
<organismHost>
    <name type="scientific">Bubalus bubalis</name>
    <name type="common">Domestic water buffalo</name>
    <dbReference type="NCBI Taxonomy" id="89462"/>
</organismHost>
<organismHost>
    <name type="scientific">Culicoides</name>
    <dbReference type="NCBI Taxonomy" id="58271"/>
</organismHost>
<organismHost>
    <name type="scientific">Syncerus caffer</name>
    <name type="common">African buffalo</name>
    <dbReference type="NCBI Taxonomy" id="9970"/>
</organismHost>
<accession>P32595</accession>
<accession>Q77N36</accession>
<protein>
    <recommendedName>
        <fullName>Glycoprotein</fullName>
    </recommendedName>
</protein>
<proteinExistence type="evidence at protein level"/>